<evidence type="ECO:0000250" key="1">
    <source>
        <dbReference type="UniProtKB" id="Q6P6M7"/>
    </source>
</evidence>
<evidence type="ECO:0000250" key="2">
    <source>
        <dbReference type="UniProtKB" id="Q9HD40"/>
    </source>
</evidence>
<evidence type="ECO:0000305" key="3"/>
<gene>
    <name type="primary">sepsecs</name>
    <name type="ORF">DDB_G0280197</name>
</gene>
<sequence length="479" mass="53253">MNLKNLETCKGLIKGSYIDQAIQGTSQFNKLLETLLIHKKLPNIGYNDKIIELILNEISLMDSNNFIENIGVGEREGRIYSGLVEKRHYGFAHGIGRSGDITEQQPKAAGSSLIQKLTHSLVLDAMKLAGLEQSSLSNCLLLPMATGMTLALTMLTLKSINANNKRYVLWPRIDQKSCLKSIITAGLIPIVIPNQLDGDMIRTDLVAIEDKIKELGVDNILCVFSTTSCFAPRVPDKIIEISEICKRYNIGHIINNAYGLQCSKILHNISQACKLGRVDAFIQSTDKNFMVPVGGAIISGPNSEFIDQISRNYPGRANSSPILDVFITLLSMGKQGWLNLLKERKELLIYFNEQLSKFALENNEKLLNTINENKISFALTLSSNNFNNNEEIISNNNNNNNNTFSMIGSKLFSRSCSGSRVIDLKSNKKLLIGGLEFNNYGSHIDNYSTSYLTVACAIGITKLEIDTFIQRLSKLFNKK</sequence>
<dbReference type="EC" id="2.9.1.2" evidence="2"/>
<dbReference type="EMBL" id="AAFI02000035">
    <property type="protein sequence ID" value="EAL67325.1"/>
    <property type="molecule type" value="Genomic_DNA"/>
</dbReference>
<dbReference type="RefSeq" id="XP_641299.1">
    <property type="nucleotide sequence ID" value="XM_636207.1"/>
</dbReference>
<dbReference type="SMR" id="Q54VQ6"/>
<dbReference type="FunCoup" id="Q54VQ6">
    <property type="interactions" value="82"/>
</dbReference>
<dbReference type="STRING" id="44689.Q54VQ6"/>
<dbReference type="PaxDb" id="44689-DDB0266531"/>
<dbReference type="EnsemblProtists" id="EAL67325">
    <property type="protein sequence ID" value="EAL67325"/>
    <property type="gene ID" value="DDB_G0280197"/>
</dbReference>
<dbReference type="GeneID" id="8622432"/>
<dbReference type="KEGG" id="ddi:DDB_G0280197"/>
<dbReference type="dictyBase" id="DDB_G0280197">
    <property type="gene designation" value="sepsecs"/>
</dbReference>
<dbReference type="VEuPathDB" id="AmoebaDB:DDB_G0280197"/>
<dbReference type="eggNOG" id="KOG3843">
    <property type="taxonomic scope" value="Eukaryota"/>
</dbReference>
<dbReference type="HOGENOM" id="CLU_022508_0_0_1"/>
<dbReference type="InParanoid" id="Q54VQ6"/>
<dbReference type="OMA" id="MSHANDY"/>
<dbReference type="PhylomeDB" id="Q54VQ6"/>
<dbReference type="UniPathway" id="UPA00906">
    <property type="reaction ID" value="UER00898"/>
</dbReference>
<dbReference type="PRO" id="PR:Q54VQ6"/>
<dbReference type="Proteomes" id="UP000002195">
    <property type="component" value="Chromosome 3"/>
</dbReference>
<dbReference type="GO" id="GO:0005737">
    <property type="term" value="C:cytoplasm"/>
    <property type="evidence" value="ECO:0007669"/>
    <property type="project" value="UniProtKB-SubCell"/>
</dbReference>
<dbReference type="GO" id="GO:0098621">
    <property type="term" value="F:O-phosphoseryl-tRNA(Sec) selenium transferase activity"/>
    <property type="evidence" value="ECO:0007669"/>
    <property type="project" value="UniProtKB-EC"/>
</dbReference>
<dbReference type="GO" id="GO:0000049">
    <property type="term" value="F:tRNA binding"/>
    <property type="evidence" value="ECO:0000318"/>
    <property type="project" value="GO_Central"/>
</dbReference>
<dbReference type="GO" id="GO:0001717">
    <property type="term" value="P:conversion of seryl-tRNAsec to selenocys-tRNAsec"/>
    <property type="evidence" value="ECO:0007669"/>
    <property type="project" value="InterPro"/>
</dbReference>
<dbReference type="GO" id="GO:0001514">
    <property type="term" value="P:selenocysteine incorporation"/>
    <property type="evidence" value="ECO:0000318"/>
    <property type="project" value="GO_Central"/>
</dbReference>
<dbReference type="Gene3D" id="3.40.640.10">
    <property type="entry name" value="Type I PLP-dependent aspartate aminotransferase-like (Major domain)"/>
    <property type="match status" value="1"/>
</dbReference>
<dbReference type="InterPro" id="IPR015424">
    <property type="entry name" value="PyrdxlP-dep_Trfase"/>
</dbReference>
<dbReference type="InterPro" id="IPR015421">
    <property type="entry name" value="PyrdxlP-dep_Trfase_major"/>
</dbReference>
<dbReference type="InterPro" id="IPR019872">
    <property type="entry name" value="Sec-tRNA_Se_transferase"/>
</dbReference>
<dbReference type="InterPro" id="IPR008829">
    <property type="entry name" value="SepSecS/SepCysS"/>
</dbReference>
<dbReference type="NCBIfam" id="TIGR03531">
    <property type="entry name" value="selenium_SpcS"/>
    <property type="match status" value="1"/>
</dbReference>
<dbReference type="PANTHER" id="PTHR12944:SF2">
    <property type="entry name" value="O-PHOSPHOSERYL-TRNA(SEC) SELENIUM TRANSFERASE"/>
    <property type="match status" value="1"/>
</dbReference>
<dbReference type="PANTHER" id="PTHR12944">
    <property type="entry name" value="SOLUBLE LIVER ANTIGEN/LIVER PANCREAS ANTIGEN"/>
    <property type="match status" value="1"/>
</dbReference>
<dbReference type="Pfam" id="PF05889">
    <property type="entry name" value="SepSecS"/>
    <property type="match status" value="1"/>
</dbReference>
<dbReference type="PIRSF" id="PIRSF017689">
    <property type="entry name" value="SepSecS"/>
    <property type="match status" value="1"/>
</dbReference>
<dbReference type="SUPFAM" id="SSF53383">
    <property type="entry name" value="PLP-dependent transferases"/>
    <property type="match status" value="1"/>
</dbReference>
<reference key="1">
    <citation type="journal article" date="2005" name="Nature">
        <title>The genome of the social amoeba Dictyostelium discoideum.</title>
        <authorList>
            <person name="Eichinger L."/>
            <person name="Pachebat J.A."/>
            <person name="Gloeckner G."/>
            <person name="Rajandream M.A."/>
            <person name="Sucgang R."/>
            <person name="Berriman M."/>
            <person name="Song J."/>
            <person name="Olsen R."/>
            <person name="Szafranski K."/>
            <person name="Xu Q."/>
            <person name="Tunggal B."/>
            <person name="Kummerfeld S."/>
            <person name="Madera M."/>
            <person name="Konfortov B.A."/>
            <person name="Rivero F."/>
            <person name="Bankier A.T."/>
            <person name="Lehmann R."/>
            <person name="Hamlin N."/>
            <person name="Davies R."/>
            <person name="Gaudet P."/>
            <person name="Fey P."/>
            <person name="Pilcher K."/>
            <person name="Chen G."/>
            <person name="Saunders D."/>
            <person name="Sodergren E.J."/>
            <person name="Davis P."/>
            <person name="Kerhornou A."/>
            <person name="Nie X."/>
            <person name="Hall N."/>
            <person name="Anjard C."/>
            <person name="Hemphill L."/>
            <person name="Bason N."/>
            <person name="Farbrother P."/>
            <person name="Desany B."/>
            <person name="Just E."/>
            <person name="Morio T."/>
            <person name="Rost R."/>
            <person name="Churcher C.M."/>
            <person name="Cooper J."/>
            <person name="Haydock S."/>
            <person name="van Driessche N."/>
            <person name="Cronin A."/>
            <person name="Goodhead I."/>
            <person name="Muzny D.M."/>
            <person name="Mourier T."/>
            <person name="Pain A."/>
            <person name="Lu M."/>
            <person name="Harper D."/>
            <person name="Lindsay R."/>
            <person name="Hauser H."/>
            <person name="James K.D."/>
            <person name="Quiles M."/>
            <person name="Madan Babu M."/>
            <person name="Saito T."/>
            <person name="Buchrieser C."/>
            <person name="Wardroper A."/>
            <person name="Felder M."/>
            <person name="Thangavelu M."/>
            <person name="Johnson D."/>
            <person name="Knights A."/>
            <person name="Loulseged H."/>
            <person name="Mungall K.L."/>
            <person name="Oliver K."/>
            <person name="Price C."/>
            <person name="Quail M.A."/>
            <person name="Urushihara H."/>
            <person name="Hernandez J."/>
            <person name="Rabbinowitsch E."/>
            <person name="Steffen D."/>
            <person name="Sanders M."/>
            <person name="Ma J."/>
            <person name="Kohara Y."/>
            <person name="Sharp S."/>
            <person name="Simmonds M.N."/>
            <person name="Spiegler S."/>
            <person name="Tivey A."/>
            <person name="Sugano S."/>
            <person name="White B."/>
            <person name="Walker D."/>
            <person name="Woodward J.R."/>
            <person name="Winckler T."/>
            <person name="Tanaka Y."/>
            <person name="Shaulsky G."/>
            <person name="Schleicher M."/>
            <person name="Weinstock G.M."/>
            <person name="Rosenthal A."/>
            <person name="Cox E.C."/>
            <person name="Chisholm R.L."/>
            <person name="Gibbs R.A."/>
            <person name="Loomis W.F."/>
            <person name="Platzer M."/>
            <person name="Kay R.R."/>
            <person name="Williams J.G."/>
            <person name="Dear P.H."/>
            <person name="Noegel A.A."/>
            <person name="Barrell B.G."/>
            <person name="Kuspa A."/>
        </authorList>
    </citation>
    <scope>NUCLEOTIDE SEQUENCE [LARGE SCALE GENOMIC DNA]</scope>
    <source>
        <strain>AX4</strain>
    </source>
</reference>
<proteinExistence type="inferred from homology"/>
<keyword id="KW-0963">Cytoplasm</keyword>
<keyword id="KW-0648">Protein biosynthesis</keyword>
<keyword id="KW-0663">Pyridoxal phosphate</keyword>
<keyword id="KW-1185">Reference proteome</keyword>
<keyword id="KW-0694">RNA-binding</keyword>
<keyword id="KW-0711">Selenium</keyword>
<keyword id="KW-0808">Transferase</keyword>
<keyword id="KW-0820">tRNA-binding</keyword>
<organism>
    <name type="scientific">Dictyostelium discoideum</name>
    <name type="common">Social amoeba</name>
    <dbReference type="NCBI Taxonomy" id="44689"/>
    <lineage>
        <taxon>Eukaryota</taxon>
        <taxon>Amoebozoa</taxon>
        <taxon>Evosea</taxon>
        <taxon>Eumycetozoa</taxon>
        <taxon>Dictyostelia</taxon>
        <taxon>Dictyosteliales</taxon>
        <taxon>Dictyosteliaceae</taxon>
        <taxon>Dictyostelium</taxon>
    </lineage>
</organism>
<feature type="chain" id="PRO_0000328331" description="O-phosphoseryl-tRNA(Sec) selenium transferase">
    <location>
        <begin position="1"/>
        <end position="479"/>
    </location>
</feature>
<feature type="region of interest" description="Tetramerization" evidence="2">
    <location>
        <begin position="1"/>
        <end position="44"/>
    </location>
</feature>
<feature type="region of interest" description="Phosphate loop (P-loop)" evidence="2">
    <location>
        <begin position="96"/>
        <end position="106"/>
    </location>
</feature>
<feature type="binding site" evidence="2">
    <location>
        <position position="75"/>
    </location>
    <ligand>
        <name>pyridoxal 5'-phosphate</name>
        <dbReference type="ChEBI" id="CHEBI:597326"/>
    </ligand>
</feature>
<feature type="binding site" evidence="2">
    <location>
        <position position="97"/>
    </location>
    <ligand>
        <name>substrate</name>
    </ligand>
</feature>
<feature type="binding site" evidence="2">
    <location>
        <position position="98"/>
    </location>
    <ligand>
        <name>substrate</name>
    </ligand>
</feature>
<feature type="binding site" evidence="2">
    <location>
        <position position="105"/>
    </location>
    <ligand>
        <name>substrate</name>
    </ligand>
</feature>
<feature type="binding site" evidence="2">
    <location>
        <position position="316"/>
    </location>
    <ligand>
        <name>substrate</name>
    </ligand>
</feature>
<feature type="binding site" evidence="2">
    <location>
        <position position="414"/>
    </location>
    <ligand>
        <name>tRNA</name>
        <dbReference type="ChEBI" id="CHEBI:17843"/>
    </ligand>
    <ligandPart>
        <name>tRNA discriminator base</name>
    </ligandPart>
</feature>
<feature type="site" description="May act as a substrate filter by repelling compounds with a negatively charged alpha-carboxylate" evidence="1">
    <location>
        <position position="74"/>
    </location>
</feature>
<feature type="modified residue" description="N6-(pyridoxal phosphate)lysine" evidence="2">
    <location>
        <position position="287"/>
    </location>
</feature>
<protein>
    <recommendedName>
        <fullName>O-phosphoseryl-tRNA(Sec) selenium transferase</fullName>
        <ecNumber evidence="2">2.9.1.2</ecNumber>
    </recommendedName>
    <alternativeName>
        <fullName>Selenocysteine synthase</fullName>
        <shortName>Sec synthase</shortName>
    </alternativeName>
    <alternativeName>
        <fullName>Selenocysteinyl-tRNA(Sec) synthase</fullName>
    </alternativeName>
    <alternativeName>
        <fullName>Sep-tRNA:Sec-tRNA synthase</fullName>
        <shortName>SepSecS</shortName>
    </alternativeName>
    <alternativeName>
        <fullName>UGA suppressor tRNA-associated protein homolog</fullName>
    </alternativeName>
</protein>
<name>SPCS_DICDI</name>
<accession>Q54VQ6</accession>
<comment type="function">
    <text evidence="2">Converts O-phosphoseryl-tRNA(Sec) to selenocysteinyl-tRNA(Sec) required for selenoprotein biosynthesis.</text>
</comment>
<comment type="catalytic activity">
    <reaction evidence="2">
        <text>O-phospho-L-seryl-tRNA(Sec) + selenophosphate + H2O = L-selenocysteinyl-tRNA(Sec) + 2 phosphate</text>
        <dbReference type="Rhea" id="RHEA:25041"/>
        <dbReference type="Rhea" id="RHEA-COMP:9743"/>
        <dbReference type="Rhea" id="RHEA-COMP:9947"/>
        <dbReference type="ChEBI" id="CHEBI:15377"/>
        <dbReference type="ChEBI" id="CHEBI:16144"/>
        <dbReference type="ChEBI" id="CHEBI:43474"/>
        <dbReference type="ChEBI" id="CHEBI:78551"/>
        <dbReference type="ChEBI" id="CHEBI:78573"/>
        <dbReference type="EC" id="2.9.1.2"/>
    </reaction>
</comment>
<comment type="cofactor">
    <cofactor evidence="2">
        <name>pyridoxal 5'-phosphate</name>
        <dbReference type="ChEBI" id="CHEBI:597326"/>
    </cofactor>
</comment>
<comment type="pathway">
    <text evidence="2">Aminoacyl-tRNA biosynthesis; selenocysteinyl-tRNA(Sec) biosynthesis; selenocysteinyl-tRNA(Sec) from L-seryl-tRNA(Sec) (archaeal/eukaryal route): step 2/2.</text>
</comment>
<comment type="subunit">
    <text evidence="2">Homotetramer formed by a catalytic dimer and a non-catalytic dimer serving as a binding platform that orients tRNASec for catalysis. Each tetramer binds the CCA ends of two tRNAs which point to the active sites of the catalytic dimer.</text>
</comment>
<comment type="subcellular location">
    <subcellularLocation>
        <location evidence="2">Cytoplasm</location>
    </subcellularLocation>
</comment>
<comment type="similarity">
    <text evidence="3">Belongs to the SepSecS family.</text>
</comment>